<accession>B0K8E7</accession>
<reference key="1">
    <citation type="submission" date="2008-01" db="EMBL/GenBank/DDBJ databases">
        <title>Complete sequence of Thermoanaerobacter pseudethanolicus 39E.</title>
        <authorList>
            <person name="Copeland A."/>
            <person name="Lucas S."/>
            <person name="Lapidus A."/>
            <person name="Barry K."/>
            <person name="Glavina del Rio T."/>
            <person name="Dalin E."/>
            <person name="Tice H."/>
            <person name="Pitluck S."/>
            <person name="Bruce D."/>
            <person name="Goodwin L."/>
            <person name="Saunders E."/>
            <person name="Brettin T."/>
            <person name="Detter J.C."/>
            <person name="Han C."/>
            <person name="Schmutz J."/>
            <person name="Larimer F."/>
            <person name="Land M."/>
            <person name="Hauser L."/>
            <person name="Kyrpides N."/>
            <person name="Lykidis A."/>
            <person name="Hemme C."/>
            <person name="Fields M.W."/>
            <person name="He Z."/>
            <person name="Zhou J."/>
            <person name="Richardson P."/>
        </authorList>
    </citation>
    <scope>NUCLEOTIDE SEQUENCE [LARGE SCALE GENOMIC DNA]</scope>
    <source>
        <strain>ATCC 33223 / DSM 2355 / 39E</strain>
    </source>
</reference>
<organism>
    <name type="scientific">Thermoanaerobacter pseudethanolicus (strain ATCC 33223 / 39E)</name>
    <name type="common">Clostridium thermohydrosulfuricum</name>
    <dbReference type="NCBI Taxonomy" id="340099"/>
    <lineage>
        <taxon>Bacteria</taxon>
        <taxon>Bacillati</taxon>
        <taxon>Bacillota</taxon>
        <taxon>Clostridia</taxon>
        <taxon>Thermoanaerobacterales</taxon>
        <taxon>Thermoanaerobacteraceae</taxon>
        <taxon>Thermoanaerobacter</taxon>
    </lineage>
</organism>
<feature type="chain" id="PRO_1000115669" description="V-type ATP synthase beta chain">
    <location>
        <begin position="1"/>
        <end position="459"/>
    </location>
</feature>
<protein>
    <recommendedName>
        <fullName evidence="1">V-type ATP synthase beta chain</fullName>
    </recommendedName>
    <alternativeName>
        <fullName evidence="1">V-ATPase subunit B</fullName>
    </alternativeName>
</protein>
<gene>
    <name evidence="1" type="primary">atpB</name>
    <name type="ordered locus">Teth39_2258</name>
</gene>
<keyword id="KW-0066">ATP synthesis</keyword>
<keyword id="KW-0375">Hydrogen ion transport</keyword>
<keyword id="KW-0406">Ion transport</keyword>
<keyword id="KW-1185">Reference proteome</keyword>
<keyword id="KW-0813">Transport</keyword>
<dbReference type="EMBL" id="CP000924">
    <property type="protein sequence ID" value="ABY95879.1"/>
    <property type="molecule type" value="Genomic_DNA"/>
</dbReference>
<dbReference type="RefSeq" id="WP_012269820.1">
    <property type="nucleotide sequence ID" value="NC_010321.1"/>
</dbReference>
<dbReference type="SMR" id="B0K8E7"/>
<dbReference type="STRING" id="340099.Teth39_2258"/>
<dbReference type="KEGG" id="tpd:Teth39_2258"/>
<dbReference type="eggNOG" id="COG1156">
    <property type="taxonomic scope" value="Bacteria"/>
</dbReference>
<dbReference type="HOGENOM" id="CLU_022916_0_0_9"/>
<dbReference type="Proteomes" id="UP000002156">
    <property type="component" value="Chromosome"/>
</dbReference>
<dbReference type="GO" id="GO:0005524">
    <property type="term" value="F:ATP binding"/>
    <property type="evidence" value="ECO:0007669"/>
    <property type="project" value="UniProtKB-UniRule"/>
</dbReference>
<dbReference type="GO" id="GO:0046933">
    <property type="term" value="F:proton-transporting ATP synthase activity, rotational mechanism"/>
    <property type="evidence" value="ECO:0007669"/>
    <property type="project" value="UniProtKB-UniRule"/>
</dbReference>
<dbReference type="GO" id="GO:0042777">
    <property type="term" value="P:proton motive force-driven plasma membrane ATP synthesis"/>
    <property type="evidence" value="ECO:0007669"/>
    <property type="project" value="UniProtKB-UniRule"/>
</dbReference>
<dbReference type="CDD" id="cd18112">
    <property type="entry name" value="ATP-synt_V_A-type_beta_C"/>
    <property type="match status" value="1"/>
</dbReference>
<dbReference type="CDD" id="cd18118">
    <property type="entry name" value="ATP-synt_V_A-type_beta_N"/>
    <property type="match status" value="1"/>
</dbReference>
<dbReference type="CDD" id="cd01135">
    <property type="entry name" value="V_A-ATPase_B"/>
    <property type="match status" value="1"/>
</dbReference>
<dbReference type="Gene3D" id="3.40.50.12240">
    <property type="match status" value="1"/>
</dbReference>
<dbReference type="HAMAP" id="MF_00310">
    <property type="entry name" value="ATP_synth_B_arch"/>
    <property type="match status" value="1"/>
</dbReference>
<dbReference type="InterPro" id="IPR055190">
    <property type="entry name" value="ATP-synt_VA_C"/>
</dbReference>
<dbReference type="InterPro" id="IPR020003">
    <property type="entry name" value="ATPase_a/bsu_AS"/>
</dbReference>
<dbReference type="InterPro" id="IPR004100">
    <property type="entry name" value="ATPase_F1/V1/A1_a/bsu_N"/>
</dbReference>
<dbReference type="InterPro" id="IPR000194">
    <property type="entry name" value="ATPase_F1/V1/A1_a/bsu_nucl-bd"/>
</dbReference>
<dbReference type="InterPro" id="IPR027417">
    <property type="entry name" value="P-loop_NTPase"/>
</dbReference>
<dbReference type="InterPro" id="IPR022879">
    <property type="entry name" value="V-ATPase_su_B/beta"/>
</dbReference>
<dbReference type="NCBIfam" id="NF003235">
    <property type="entry name" value="PRK04196.1"/>
    <property type="match status" value="1"/>
</dbReference>
<dbReference type="PANTHER" id="PTHR43389">
    <property type="entry name" value="V-TYPE PROTON ATPASE SUBUNIT B"/>
    <property type="match status" value="1"/>
</dbReference>
<dbReference type="PANTHER" id="PTHR43389:SF4">
    <property type="entry name" value="V-TYPE PROTON ATPASE SUBUNIT B"/>
    <property type="match status" value="1"/>
</dbReference>
<dbReference type="Pfam" id="PF00006">
    <property type="entry name" value="ATP-synt_ab"/>
    <property type="match status" value="1"/>
</dbReference>
<dbReference type="Pfam" id="PF02874">
    <property type="entry name" value="ATP-synt_ab_N"/>
    <property type="match status" value="1"/>
</dbReference>
<dbReference type="Pfam" id="PF22919">
    <property type="entry name" value="ATP-synt_VA_C"/>
    <property type="match status" value="1"/>
</dbReference>
<dbReference type="PIRSF" id="PIRSF039114">
    <property type="entry name" value="V-ATPsynth_beta/V-ATPase_B"/>
    <property type="match status" value="1"/>
</dbReference>
<dbReference type="SUPFAM" id="SSF52540">
    <property type="entry name" value="P-loop containing nucleoside triphosphate hydrolases"/>
    <property type="match status" value="1"/>
</dbReference>
<dbReference type="PROSITE" id="PS00152">
    <property type="entry name" value="ATPASE_ALPHA_BETA"/>
    <property type="match status" value="1"/>
</dbReference>
<name>VATB_THEP3</name>
<proteinExistence type="inferred from homology"/>
<evidence type="ECO:0000255" key="1">
    <source>
        <dbReference type="HAMAP-Rule" id="MF_00310"/>
    </source>
</evidence>
<sequence length="459" mass="51242">MLREYKTVREIVGPLMLVEKVEGVKYNELVEIETGTGEIRRGQVLEVNGDKALVQLFEGSTGLNINDCKVRFVGKSIELGVSIDMLGRVFDGLGRPRDKGPMIIPEKRLDINGNPINPTARDYPSEFIQTGISAIDGLNTLVRGQKLPIFSGSGLPHAQLAAQIARQAKVLGSDSKFAVVFAAMGITFEEADYFISDFRRTGAIDRSVLFINLANDPAIERIATPRMALTCAEFLAYEKEMHVLVIMTDMTNYCEALREVSAARKEVPGRRGYPGYLYTDLATIYERAGRIKGRKGSITQIPILTMPEDDKTHPIPDLTGYITEGQIILSRDLYRKGIYPPIDVLPSLSRLKDKGIGQGKTREDHADLMNQLFASYARGKQAKELAVILGEAALSDTDKLYAKFADEFEARYVAQREDEDRSIEETLAIGWDLLTILPRAELKRVRDEYIDKYLPEKGE</sequence>
<comment type="function">
    <text evidence="1">Produces ATP from ADP in the presence of a proton gradient across the membrane. The V-type beta chain is a regulatory subunit.</text>
</comment>
<comment type="similarity">
    <text evidence="1">Belongs to the ATPase alpha/beta chains family.</text>
</comment>